<gene>
    <name type="ORF">SPAC22H10.04</name>
</gene>
<name>YD44_SCHPO</name>
<accession>Q10298</accession>
<reference key="1">
    <citation type="journal article" date="2002" name="Nature">
        <title>The genome sequence of Schizosaccharomyces pombe.</title>
        <authorList>
            <person name="Wood V."/>
            <person name="Gwilliam R."/>
            <person name="Rajandream M.A."/>
            <person name="Lyne M.H."/>
            <person name="Lyne R."/>
            <person name="Stewart A."/>
            <person name="Sgouros J.G."/>
            <person name="Peat N."/>
            <person name="Hayles J."/>
            <person name="Baker S.G."/>
            <person name="Basham D."/>
            <person name="Bowman S."/>
            <person name="Brooks K."/>
            <person name="Brown D."/>
            <person name="Brown S."/>
            <person name="Chillingworth T."/>
            <person name="Churcher C.M."/>
            <person name="Collins M."/>
            <person name="Connor R."/>
            <person name="Cronin A."/>
            <person name="Davis P."/>
            <person name="Feltwell T."/>
            <person name="Fraser A."/>
            <person name="Gentles S."/>
            <person name="Goble A."/>
            <person name="Hamlin N."/>
            <person name="Harris D.E."/>
            <person name="Hidalgo J."/>
            <person name="Hodgson G."/>
            <person name="Holroyd S."/>
            <person name="Hornsby T."/>
            <person name="Howarth S."/>
            <person name="Huckle E.J."/>
            <person name="Hunt S."/>
            <person name="Jagels K."/>
            <person name="James K.D."/>
            <person name="Jones L."/>
            <person name="Jones M."/>
            <person name="Leather S."/>
            <person name="McDonald S."/>
            <person name="McLean J."/>
            <person name="Mooney P."/>
            <person name="Moule S."/>
            <person name="Mungall K.L."/>
            <person name="Murphy L.D."/>
            <person name="Niblett D."/>
            <person name="Odell C."/>
            <person name="Oliver K."/>
            <person name="O'Neil S."/>
            <person name="Pearson D."/>
            <person name="Quail M.A."/>
            <person name="Rabbinowitsch E."/>
            <person name="Rutherford K.M."/>
            <person name="Rutter S."/>
            <person name="Saunders D."/>
            <person name="Seeger K."/>
            <person name="Sharp S."/>
            <person name="Skelton J."/>
            <person name="Simmonds M.N."/>
            <person name="Squares R."/>
            <person name="Squares S."/>
            <person name="Stevens K."/>
            <person name="Taylor K."/>
            <person name="Taylor R.G."/>
            <person name="Tivey A."/>
            <person name="Walsh S.V."/>
            <person name="Warren T."/>
            <person name="Whitehead S."/>
            <person name="Woodward J.R."/>
            <person name="Volckaert G."/>
            <person name="Aert R."/>
            <person name="Robben J."/>
            <person name="Grymonprez B."/>
            <person name="Weltjens I."/>
            <person name="Vanstreels E."/>
            <person name="Rieger M."/>
            <person name="Schaefer M."/>
            <person name="Mueller-Auer S."/>
            <person name="Gabel C."/>
            <person name="Fuchs M."/>
            <person name="Duesterhoeft A."/>
            <person name="Fritzc C."/>
            <person name="Holzer E."/>
            <person name="Moestl D."/>
            <person name="Hilbert H."/>
            <person name="Borzym K."/>
            <person name="Langer I."/>
            <person name="Beck A."/>
            <person name="Lehrach H."/>
            <person name="Reinhardt R."/>
            <person name="Pohl T.M."/>
            <person name="Eger P."/>
            <person name="Zimmermann W."/>
            <person name="Wedler H."/>
            <person name="Wambutt R."/>
            <person name="Purnelle B."/>
            <person name="Goffeau A."/>
            <person name="Cadieu E."/>
            <person name="Dreano S."/>
            <person name="Gloux S."/>
            <person name="Lelaure V."/>
            <person name="Mottier S."/>
            <person name="Galibert F."/>
            <person name="Aves S.J."/>
            <person name="Xiang Z."/>
            <person name="Hunt C."/>
            <person name="Moore K."/>
            <person name="Hurst S.M."/>
            <person name="Lucas M."/>
            <person name="Rochet M."/>
            <person name="Gaillardin C."/>
            <person name="Tallada V.A."/>
            <person name="Garzon A."/>
            <person name="Thode G."/>
            <person name="Daga R.R."/>
            <person name="Cruzado L."/>
            <person name="Jimenez J."/>
            <person name="Sanchez M."/>
            <person name="del Rey F."/>
            <person name="Benito J."/>
            <person name="Dominguez A."/>
            <person name="Revuelta J.L."/>
            <person name="Moreno S."/>
            <person name="Armstrong J."/>
            <person name="Forsburg S.L."/>
            <person name="Cerutti L."/>
            <person name="Lowe T."/>
            <person name="McCombie W.R."/>
            <person name="Paulsen I."/>
            <person name="Potashkin J."/>
            <person name="Shpakovski G.V."/>
            <person name="Ussery D."/>
            <person name="Barrell B.G."/>
            <person name="Nurse P."/>
        </authorList>
    </citation>
    <scope>NUCLEOTIDE SEQUENCE [LARGE SCALE GENOMIC DNA]</scope>
    <source>
        <strain>972 / ATCC 24843</strain>
    </source>
</reference>
<evidence type="ECO:0000250" key="1"/>
<evidence type="ECO:0000305" key="2"/>
<sequence>MIDLDNIIERLYEKQLIAESVIAYLCSLAKEVLMQESNVVRLSTPITVVGDIHGQFDDLLEIFRIGGPCPYTNYLFLGDYVDRGYYSIETITLLICLKLRYPKRITLLRGNHESRGITQTYGFYSECLRKYGNANVWKYFTDIFDFLTLSATIDDTIFCVHGGLSPSIQHIDQILVLDRFREFPHEGPMADLVWSDPDPSVQEFSLSPRGAGFSFGEVIVTKFLEYNNMKHILRAHQLCSEGYQILFEKKLSTVWSAPNYCYRCANLASILQIDTDQSRFFNVFDAAPNQETPFVEPAAKVTAEYFL</sequence>
<keyword id="KW-0378">Hydrolase</keyword>
<keyword id="KW-0464">Manganese</keyword>
<keyword id="KW-0479">Metal-binding</keyword>
<keyword id="KW-0904">Protein phosphatase</keyword>
<keyword id="KW-1185">Reference proteome</keyword>
<feature type="chain" id="PRO_0000058918" description="Putative serine/threonine-protein phosphatase C22H10.04">
    <location>
        <begin position="1"/>
        <end position="307"/>
    </location>
</feature>
<feature type="active site" description="Proton donor" evidence="1">
    <location>
        <position position="112"/>
    </location>
</feature>
<feature type="binding site" evidence="1">
    <location>
        <position position="51"/>
    </location>
    <ligand>
        <name>Mn(2+)</name>
        <dbReference type="ChEBI" id="CHEBI:29035"/>
        <label>1</label>
    </ligand>
</feature>
<feature type="binding site" evidence="1">
    <location>
        <position position="53"/>
    </location>
    <ligand>
        <name>Mn(2+)</name>
        <dbReference type="ChEBI" id="CHEBI:29035"/>
        <label>1</label>
    </ligand>
</feature>
<feature type="binding site" evidence="1">
    <location>
        <position position="79"/>
    </location>
    <ligand>
        <name>Mn(2+)</name>
        <dbReference type="ChEBI" id="CHEBI:29035"/>
        <label>1</label>
    </ligand>
</feature>
<feature type="binding site" evidence="1">
    <location>
        <position position="79"/>
    </location>
    <ligand>
        <name>Mn(2+)</name>
        <dbReference type="ChEBI" id="CHEBI:29035"/>
        <label>2</label>
    </ligand>
</feature>
<feature type="binding site" evidence="1">
    <location>
        <position position="111"/>
    </location>
    <ligand>
        <name>Mn(2+)</name>
        <dbReference type="ChEBI" id="CHEBI:29035"/>
        <label>2</label>
    </ligand>
</feature>
<feature type="binding site" evidence="1">
    <location>
        <position position="161"/>
    </location>
    <ligand>
        <name>Mn(2+)</name>
        <dbReference type="ChEBI" id="CHEBI:29035"/>
        <label>2</label>
    </ligand>
</feature>
<feature type="binding site" evidence="1">
    <location>
        <position position="236"/>
    </location>
    <ligand>
        <name>Mn(2+)</name>
        <dbReference type="ChEBI" id="CHEBI:29035"/>
        <label>2</label>
    </ligand>
</feature>
<protein>
    <recommendedName>
        <fullName>Putative serine/threonine-protein phosphatase C22H10.04</fullName>
        <ecNumber>3.1.3.16</ecNumber>
    </recommendedName>
</protein>
<organism>
    <name type="scientific">Schizosaccharomyces pombe (strain 972 / ATCC 24843)</name>
    <name type="common">Fission yeast</name>
    <dbReference type="NCBI Taxonomy" id="284812"/>
    <lineage>
        <taxon>Eukaryota</taxon>
        <taxon>Fungi</taxon>
        <taxon>Dikarya</taxon>
        <taxon>Ascomycota</taxon>
        <taxon>Taphrinomycotina</taxon>
        <taxon>Schizosaccharomycetes</taxon>
        <taxon>Schizosaccharomycetales</taxon>
        <taxon>Schizosaccharomycetaceae</taxon>
        <taxon>Schizosaccharomyces</taxon>
    </lineage>
</organism>
<proteinExistence type="inferred from homology"/>
<dbReference type="EC" id="3.1.3.16"/>
<dbReference type="EMBL" id="CU329670">
    <property type="protein sequence ID" value="CAA93605.1"/>
    <property type="molecule type" value="Genomic_DNA"/>
</dbReference>
<dbReference type="PIR" id="T38206">
    <property type="entry name" value="T38206"/>
</dbReference>
<dbReference type="SMR" id="Q10298"/>
<dbReference type="BioGRID" id="277949">
    <property type="interactions" value="6"/>
</dbReference>
<dbReference type="FunCoup" id="Q10298">
    <property type="interactions" value="58"/>
</dbReference>
<dbReference type="STRING" id="284812.Q10298"/>
<dbReference type="PaxDb" id="4896-SPAC22H10.04.1"/>
<dbReference type="EnsemblFungi" id="SPAC22H10.04.1">
    <property type="protein sequence ID" value="SPAC22H10.04.1:pep"/>
    <property type="gene ID" value="SPAC22H10.04"/>
</dbReference>
<dbReference type="KEGG" id="spo:2541444"/>
<dbReference type="PomBase" id="SPAC22H10.04"/>
<dbReference type="VEuPathDB" id="FungiDB:SPAC22H10.04"/>
<dbReference type="eggNOG" id="KOG0372">
    <property type="taxonomic scope" value="Eukaryota"/>
</dbReference>
<dbReference type="HOGENOM" id="CLU_004962_8_1_1"/>
<dbReference type="InParanoid" id="Q10298"/>
<dbReference type="OMA" id="FREFPHE"/>
<dbReference type="PhylomeDB" id="Q10298"/>
<dbReference type="PRO" id="PR:Q10298"/>
<dbReference type="Proteomes" id="UP000002485">
    <property type="component" value="Chromosome I"/>
</dbReference>
<dbReference type="GO" id="GO:0090443">
    <property type="term" value="C:FAR/SIN/STRIPAK complex"/>
    <property type="evidence" value="ECO:0000314"/>
    <property type="project" value="PomBase"/>
</dbReference>
<dbReference type="GO" id="GO:0044732">
    <property type="term" value="C:mitotic spindle pole body"/>
    <property type="evidence" value="ECO:0000269"/>
    <property type="project" value="PomBase"/>
</dbReference>
<dbReference type="GO" id="GO:0046872">
    <property type="term" value="F:metal ion binding"/>
    <property type="evidence" value="ECO:0007669"/>
    <property type="project" value="UniProtKB-KW"/>
</dbReference>
<dbReference type="GO" id="GO:0004721">
    <property type="term" value="F:phosphoprotein phosphatase activity"/>
    <property type="evidence" value="ECO:0000269"/>
    <property type="project" value="PomBase"/>
</dbReference>
<dbReference type="GO" id="GO:0004722">
    <property type="term" value="F:protein serine/threonine phosphatase activity"/>
    <property type="evidence" value="ECO:0000318"/>
    <property type="project" value="GO_Central"/>
</dbReference>
<dbReference type="GO" id="GO:0061509">
    <property type="term" value="P:asymmetric protein localization to old mitotic spindle pole body"/>
    <property type="evidence" value="ECO:0000315"/>
    <property type="project" value="PomBase"/>
</dbReference>
<dbReference type="GO" id="GO:0031030">
    <property type="term" value="P:negative regulation of septation initiation signaling"/>
    <property type="evidence" value="ECO:0000315"/>
    <property type="project" value="PomBase"/>
</dbReference>
<dbReference type="CDD" id="cd07415">
    <property type="entry name" value="MPP_PP2A_PP4_PP6"/>
    <property type="match status" value="1"/>
</dbReference>
<dbReference type="FunFam" id="3.60.21.10:FF:000040">
    <property type="entry name" value="Serine/threonine-protein phosphatase"/>
    <property type="match status" value="1"/>
</dbReference>
<dbReference type="Gene3D" id="3.60.21.10">
    <property type="match status" value="1"/>
</dbReference>
<dbReference type="InterPro" id="IPR004843">
    <property type="entry name" value="Calcineurin-like_PHP_ApaH"/>
</dbReference>
<dbReference type="InterPro" id="IPR029052">
    <property type="entry name" value="Metallo-depent_PP-like"/>
</dbReference>
<dbReference type="InterPro" id="IPR047129">
    <property type="entry name" value="PPA2-like"/>
</dbReference>
<dbReference type="InterPro" id="IPR006186">
    <property type="entry name" value="Ser/Thr-sp_prot-phosphatase"/>
</dbReference>
<dbReference type="PANTHER" id="PTHR45619">
    <property type="entry name" value="SERINE/THREONINE-PROTEIN PHOSPHATASE PP2A-RELATED"/>
    <property type="match status" value="1"/>
</dbReference>
<dbReference type="Pfam" id="PF00149">
    <property type="entry name" value="Metallophos"/>
    <property type="match status" value="1"/>
</dbReference>
<dbReference type="PRINTS" id="PR00114">
    <property type="entry name" value="STPHPHTASE"/>
</dbReference>
<dbReference type="SMART" id="SM00156">
    <property type="entry name" value="PP2Ac"/>
    <property type="match status" value="1"/>
</dbReference>
<dbReference type="SUPFAM" id="SSF56300">
    <property type="entry name" value="Metallo-dependent phosphatases"/>
    <property type="match status" value="1"/>
</dbReference>
<dbReference type="PROSITE" id="PS00125">
    <property type="entry name" value="SER_THR_PHOSPHATASE"/>
    <property type="match status" value="1"/>
</dbReference>
<comment type="catalytic activity">
    <reaction>
        <text>O-phospho-L-seryl-[protein] + H2O = L-seryl-[protein] + phosphate</text>
        <dbReference type="Rhea" id="RHEA:20629"/>
        <dbReference type="Rhea" id="RHEA-COMP:9863"/>
        <dbReference type="Rhea" id="RHEA-COMP:11604"/>
        <dbReference type="ChEBI" id="CHEBI:15377"/>
        <dbReference type="ChEBI" id="CHEBI:29999"/>
        <dbReference type="ChEBI" id="CHEBI:43474"/>
        <dbReference type="ChEBI" id="CHEBI:83421"/>
        <dbReference type="EC" id="3.1.3.16"/>
    </reaction>
</comment>
<comment type="catalytic activity">
    <reaction>
        <text>O-phospho-L-threonyl-[protein] + H2O = L-threonyl-[protein] + phosphate</text>
        <dbReference type="Rhea" id="RHEA:47004"/>
        <dbReference type="Rhea" id="RHEA-COMP:11060"/>
        <dbReference type="Rhea" id="RHEA-COMP:11605"/>
        <dbReference type="ChEBI" id="CHEBI:15377"/>
        <dbReference type="ChEBI" id="CHEBI:30013"/>
        <dbReference type="ChEBI" id="CHEBI:43474"/>
        <dbReference type="ChEBI" id="CHEBI:61977"/>
        <dbReference type="EC" id="3.1.3.16"/>
    </reaction>
</comment>
<comment type="cofactor">
    <cofactor evidence="1">
        <name>Mn(2+)</name>
        <dbReference type="ChEBI" id="CHEBI:29035"/>
    </cofactor>
    <text evidence="1">Binds 2 manganese ions per subunit.</text>
</comment>
<comment type="similarity">
    <text evidence="2">Belongs to the PPP phosphatase family. PP-X subfamily.</text>
</comment>